<accession>Q8ZVR0</accession>
<feature type="chain" id="PRO_0000154018" description="TATA-box-binding protein">
    <location>
        <begin position="1"/>
        <end position="199"/>
    </location>
</feature>
<feature type="repeat" description="1">
    <location>
        <begin position="10"/>
        <end position="86"/>
    </location>
</feature>
<feature type="repeat" description="2">
    <location>
        <begin position="101"/>
        <end position="177"/>
    </location>
</feature>
<dbReference type="EMBL" id="AE009441">
    <property type="protein sequence ID" value="AAL63996.1"/>
    <property type="molecule type" value="Genomic_DNA"/>
</dbReference>
<dbReference type="RefSeq" id="WP_011008464.1">
    <property type="nucleotide sequence ID" value="NC_003364.1"/>
</dbReference>
<dbReference type="SMR" id="Q8ZVR0"/>
<dbReference type="FunCoup" id="Q8ZVR0">
    <property type="interactions" value="148"/>
</dbReference>
<dbReference type="STRING" id="178306.PAE2164"/>
<dbReference type="EnsemblBacteria" id="AAL63996">
    <property type="protein sequence ID" value="AAL63996"/>
    <property type="gene ID" value="PAE2164"/>
</dbReference>
<dbReference type="GeneID" id="1464329"/>
<dbReference type="KEGG" id="pai:PAE2164"/>
<dbReference type="PATRIC" id="fig|178306.9.peg.1602"/>
<dbReference type="eggNOG" id="arCOG01764">
    <property type="taxonomic scope" value="Archaea"/>
</dbReference>
<dbReference type="HOGENOM" id="CLU_060161_4_3_2"/>
<dbReference type="InParanoid" id="Q8ZVR0"/>
<dbReference type="Proteomes" id="UP000002439">
    <property type="component" value="Chromosome"/>
</dbReference>
<dbReference type="GO" id="GO:0003677">
    <property type="term" value="F:DNA binding"/>
    <property type="evidence" value="ECO:0007669"/>
    <property type="project" value="UniProtKB-KW"/>
</dbReference>
<dbReference type="GO" id="GO:0003700">
    <property type="term" value="F:DNA-binding transcription factor activity"/>
    <property type="evidence" value="ECO:0007669"/>
    <property type="project" value="UniProtKB-UniRule"/>
</dbReference>
<dbReference type="GO" id="GO:0140223">
    <property type="term" value="F:general transcription initiation factor activity"/>
    <property type="evidence" value="ECO:0000318"/>
    <property type="project" value="GO_Central"/>
</dbReference>
<dbReference type="GO" id="GO:0006352">
    <property type="term" value="P:DNA-templated transcription initiation"/>
    <property type="evidence" value="ECO:0000318"/>
    <property type="project" value="GO_Central"/>
</dbReference>
<dbReference type="CDD" id="cd04518">
    <property type="entry name" value="TBP_archaea"/>
    <property type="match status" value="1"/>
</dbReference>
<dbReference type="FunFam" id="3.30.310.10:FF:000007">
    <property type="entry name" value="TATA-box-binding protein"/>
    <property type="match status" value="1"/>
</dbReference>
<dbReference type="FunFam" id="3.30.310.10:FF:000010">
    <property type="entry name" value="TATA-box-binding protein"/>
    <property type="match status" value="1"/>
</dbReference>
<dbReference type="Gene3D" id="3.30.310.10">
    <property type="entry name" value="TATA-Binding Protein"/>
    <property type="match status" value="2"/>
</dbReference>
<dbReference type="HAMAP" id="MF_00408">
    <property type="entry name" value="TATA_bind_prot_arch"/>
    <property type="match status" value="1"/>
</dbReference>
<dbReference type="InterPro" id="IPR000814">
    <property type="entry name" value="TBP"/>
</dbReference>
<dbReference type="InterPro" id="IPR033711">
    <property type="entry name" value="TBP_archaea"/>
</dbReference>
<dbReference type="InterPro" id="IPR030491">
    <property type="entry name" value="TBP_CS"/>
</dbReference>
<dbReference type="InterPro" id="IPR012295">
    <property type="entry name" value="TBP_dom_sf"/>
</dbReference>
<dbReference type="NCBIfam" id="NF001592">
    <property type="entry name" value="PRK00394.1-1"/>
    <property type="match status" value="1"/>
</dbReference>
<dbReference type="NCBIfam" id="NF001593">
    <property type="entry name" value="PRK00394.1-2"/>
    <property type="match status" value="1"/>
</dbReference>
<dbReference type="PANTHER" id="PTHR10126">
    <property type="entry name" value="TATA-BOX BINDING PROTEIN"/>
    <property type="match status" value="1"/>
</dbReference>
<dbReference type="Pfam" id="PF00352">
    <property type="entry name" value="TBP"/>
    <property type="match status" value="2"/>
</dbReference>
<dbReference type="PRINTS" id="PR00686">
    <property type="entry name" value="TIFACTORIID"/>
</dbReference>
<dbReference type="SUPFAM" id="SSF55945">
    <property type="entry name" value="TATA-box binding protein-like"/>
    <property type="match status" value="2"/>
</dbReference>
<dbReference type="PROSITE" id="PS00351">
    <property type="entry name" value="TFIID"/>
    <property type="match status" value="2"/>
</dbReference>
<reference key="1">
    <citation type="journal article" date="2002" name="Proc. Natl. Acad. Sci. U.S.A.">
        <title>Genome sequence of the hyperthermophilic crenarchaeon Pyrobaculum aerophilum.</title>
        <authorList>
            <person name="Fitz-Gibbon S.T."/>
            <person name="Ladner H."/>
            <person name="Kim U.-J."/>
            <person name="Stetter K.O."/>
            <person name="Simon M.I."/>
            <person name="Miller J.H."/>
        </authorList>
    </citation>
    <scope>NUCLEOTIDE SEQUENCE [LARGE SCALE GENOMIC DNA]</scope>
    <source>
        <strain>ATCC 51768 / DSM 7523 / JCM 9630 / CIP 104966 / NBRC 100827 / IM2</strain>
    </source>
</reference>
<sequence length="199" mass="22095">MSSKGPSYRIENIVATVNLGVELDLEQLAERLTMAEYNPDQFPGLILRLTKPRISALIFRTGKMVCTGAKNEEDLKNAVRALVKLLKDHGADVPFDPEVQIQNIVASGNLHAEVDLEQAVLMLENAMYEPEQFPGLIYRMSSPRVVILIFGSGKIVCTGAKSEKDVATAVQKLYNQLKELGVLYVEEGGEELEEFEEEL</sequence>
<keyword id="KW-0238">DNA-binding</keyword>
<keyword id="KW-1185">Reference proteome</keyword>
<keyword id="KW-0677">Repeat</keyword>
<keyword id="KW-0804">Transcription</keyword>
<keyword id="KW-0805">Transcription regulation</keyword>
<gene>
    <name evidence="1" type="primary">tbp</name>
    <name type="ordered locus">PAE2164</name>
</gene>
<proteinExistence type="inferred from homology"/>
<organism>
    <name type="scientific">Pyrobaculum aerophilum (strain ATCC 51768 / DSM 7523 / JCM 9630 / CIP 104966 / NBRC 100827 / IM2)</name>
    <dbReference type="NCBI Taxonomy" id="178306"/>
    <lineage>
        <taxon>Archaea</taxon>
        <taxon>Thermoproteota</taxon>
        <taxon>Thermoprotei</taxon>
        <taxon>Thermoproteales</taxon>
        <taxon>Thermoproteaceae</taxon>
        <taxon>Pyrobaculum</taxon>
    </lineage>
</organism>
<comment type="function">
    <text evidence="1">General factor that plays a role in the activation of archaeal genes transcribed by RNA polymerase. Binds specifically to the TATA box promoter element which lies close to the position of transcription initiation.</text>
</comment>
<comment type="similarity">
    <text evidence="1">Belongs to the TBP family.</text>
</comment>
<protein>
    <recommendedName>
        <fullName evidence="1">TATA-box-binding protein</fullName>
    </recommendedName>
    <alternativeName>
        <fullName evidence="1">Box A-binding protein</fullName>
        <shortName evidence="1">BAP</shortName>
    </alternativeName>
    <alternativeName>
        <fullName evidence="1">TATA sequence-binding protein</fullName>
        <shortName evidence="1">TBP</shortName>
    </alternativeName>
    <alternativeName>
        <fullName evidence="1">TATA-box factor</fullName>
    </alternativeName>
</protein>
<evidence type="ECO:0000255" key="1">
    <source>
        <dbReference type="HAMAP-Rule" id="MF_00408"/>
    </source>
</evidence>
<name>TBP_PYRAE</name>